<reference key="1">
    <citation type="journal article" date="1990" name="Neuron">
        <title>A neuronal nicotinic acetylcholine receptor subunit (alpha 7) is developmentally regulated and forms a homo-oligomeric channel blocked by alpha-BTX.</title>
        <authorList>
            <person name="Couturier S."/>
            <person name="Bertrand D."/>
            <person name="Matter J.-M."/>
            <person name="Hernandez M.-C."/>
            <person name="Bertrand S."/>
            <person name="Millar N."/>
            <person name="Valera S."/>
            <person name="Barkas T."/>
            <person name="Ballivet M."/>
        </authorList>
    </citation>
    <scope>NUCLEOTIDE SEQUENCE [MRNA]</scope>
    <source>
        <tissue>Brain</tissue>
    </source>
</reference>
<reference key="2">
    <citation type="journal article" date="1990" name="Neuron">
        <title>Brain alpha-bungarotoxin binding protein cDNAs and MAbs reveal subtypes of this branch of the ligand-gated ion channel gene superfamily.</title>
        <authorList>
            <person name="Schoepfer R."/>
            <person name="Conroy W.G."/>
            <person name="Whiting P."/>
            <person name="Gore M."/>
            <person name="Lindstroem J."/>
        </authorList>
    </citation>
    <scope>NUCLEOTIDE SEQUENCE [MRNA]</scope>
    <source>
        <tissue>Brain</tissue>
    </source>
</reference>
<reference key="3">
    <citation type="journal article" date="1992" name="EMBO J.">
        <title>Neuronal specificity of the alpha 7 nicotinic acetylcholine receptor promoter develops during morphogenesis of the central nervous system.</title>
        <authorList>
            <person name="Matter-Sadzinski L."/>
            <person name="Hernandez M.-C."/>
            <person name="Roztocil T."/>
            <person name="Ballivet M."/>
            <person name="Matter J.-M."/>
        </authorList>
    </citation>
    <scope>NUCLEOTIDE SEQUENCE [GENOMIC DNA] OF 1-18</scope>
    <source>
        <strain>White leghorn</strain>
        <tissue>Erythrocyte</tissue>
    </source>
</reference>
<reference key="4">
    <citation type="journal article" date="1985" name="Proc. Natl. Acad. Sci. U.S.A.">
        <title>Brain and muscle nicotinic acetylcholine receptors are different but homologous proteins.</title>
        <authorList>
            <person name="Conti-Tronconi B.M."/>
            <person name="Dunn S.M.J."/>
            <person name="Barnard E.A."/>
            <person name="Dolly J.O."/>
            <person name="Lai F.A."/>
            <person name="Ray N."/>
            <person name="Raftery M.A."/>
        </authorList>
    </citation>
    <scope>PROTEIN SEQUENCE OF 24-47</scope>
    <source>
        <tissue>Brain</tissue>
    </source>
</reference>
<reference key="5">
    <citation type="journal article" date="1991" name="Nature">
        <title>Mutations in the channel domain alter desensitization of a neuronal nicotinic receptor.</title>
        <authorList>
            <person name="Recah F."/>
            <person name="Bertrand D."/>
            <person name="Galzi J.-L."/>
            <person name="Devillers-Thiery A."/>
            <person name="Mulle C."/>
            <person name="Hussy N."/>
            <person name="Bertrand S."/>
            <person name="Ballivet M."/>
            <person name="Changeux J.-P."/>
        </authorList>
    </citation>
    <scope>MUTAGENESIS OF LEU-270</scope>
</reference>
<reference key="6">
    <citation type="journal article" date="1992" name="Nature">
        <title>Mutations in the channel domain of a neuronal nicotinic receptor convert ion selectivity from cationic to anionic.</title>
        <authorList>
            <person name="Galzi J.-L."/>
            <person name="Devillers-Thiery A."/>
            <person name="Hussy N."/>
            <person name="Bertrand S."/>
            <person name="Changeux J.-P."/>
            <person name="Bertrand D."/>
        </authorList>
    </citation>
    <scope>MUTAGENESIS TO CONVERT ION SELECTIVITY FROM CATIONIC TO ANIONIC</scope>
</reference>
<reference key="7">
    <citation type="journal article" date="1994" name="Mol. Pharmacol.">
        <title>Human alpha 7 acetylcholine receptor: cloning of the alpha 7 subunit from the SH-SY5Y cell line and determination of pharmacological properties of native receptors and functional alpha 7 homomers expressed in Xenopus oocytes.</title>
        <authorList>
            <person name="Peng X."/>
            <person name="Katz M."/>
            <person name="Gerzanich V."/>
            <person name="Anand R."/>
            <person name="Lindstrom J."/>
        </authorList>
    </citation>
    <scope>FUNCTION</scope>
    <scope>ACTIVITY REGULATION</scope>
    <source>
        <tissue>Brain</tissue>
    </source>
</reference>
<organism>
    <name type="scientific">Gallus gallus</name>
    <name type="common">Chicken</name>
    <dbReference type="NCBI Taxonomy" id="9031"/>
    <lineage>
        <taxon>Eukaryota</taxon>
        <taxon>Metazoa</taxon>
        <taxon>Chordata</taxon>
        <taxon>Craniata</taxon>
        <taxon>Vertebrata</taxon>
        <taxon>Euteleostomi</taxon>
        <taxon>Archelosauria</taxon>
        <taxon>Archosauria</taxon>
        <taxon>Dinosauria</taxon>
        <taxon>Saurischia</taxon>
        <taxon>Theropoda</taxon>
        <taxon>Coelurosauria</taxon>
        <taxon>Aves</taxon>
        <taxon>Neognathae</taxon>
        <taxon>Galloanserae</taxon>
        <taxon>Galliformes</taxon>
        <taxon>Phasianidae</taxon>
        <taxon>Phasianinae</taxon>
        <taxon>Gallus</taxon>
    </lineage>
</organism>
<protein>
    <recommendedName>
        <fullName>Neuronal acetylcholine receptor subunit alpha-7</fullName>
        <shortName>nAChR7</shortName>
    </recommendedName>
    <alternativeName>
        <fullName>Nicotinic acetylcholine receptor subunit alpha-7</fullName>
    </alternativeName>
</protein>
<keyword id="KW-0002">3D-structure</keyword>
<keyword id="KW-0106">Calcium</keyword>
<keyword id="KW-1003">Cell membrane</keyword>
<keyword id="KW-0903">Direct protein sequencing</keyword>
<keyword id="KW-1015">Disulfide bond</keyword>
<keyword id="KW-0325">Glycoprotein</keyword>
<keyword id="KW-0407">Ion channel</keyword>
<keyword id="KW-0406">Ion transport</keyword>
<keyword id="KW-1071">Ligand-gated ion channel</keyword>
<keyword id="KW-0472">Membrane</keyword>
<keyword id="KW-0479">Metal-binding</keyword>
<keyword id="KW-0628">Postsynaptic cell membrane</keyword>
<keyword id="KW-0675">Receptor</keyword>
<keyword id="KW-1185">Reference proteome</keyword>
<keyword id="KW-0732">Signal</keyword>
<keyword id="KW-0770">Synapse</keyword>
<keyword id="KW-0812">Transmembrane</keyword>
<keyword id="KW-1133">Transmembrane helix</keyword>
<keyword id="KW-0813">Transport</keyword>
<gene>
    <name type="primary">CHRNA7</name>
</gene>
<name>ACHA7_CHICK</name>
<comment type="function">
    <text evidence="2 5">Component of neuronal acetylcholine receptors (nAChRs) that function as pentameric, ligand-gated cation channels with high calcium permeability among other activities. nAChRs are excitatory neurotrasnmitter receptors formed by a collection of nAChR subunits known to mediate synaptic transmission in the nervous system and the neuromuscular junction. Each nAchR subunit confers differential attributes to channel properties, including activation, deactivation and desensitization kinetics, pH sensitivity, cation permeability, and binding to allosteric modulators. CHRNA7 is an homooligomeric neuronal acetylcholine receptor abundantly expressed in the central nervous system. Characterized by a fast desensitization and high calcium permeability (PubMed:1702646). Also expressed in non-neuronal cells such as immune cells like lymphocytes, monocytes and macrophages (By similarity).</text>
</comment>
<comment type="catalytic activity">
    <reaction evidence="2">
        <text>Ca(2+)(in) = Ca(2+)(out)</text>
        <dbReference type="Rhea" id="RHEA:29671"/>
        <dbReference type="ChEBI" id="CHEBI:29108"/>
    </reaction>
</comment>
<comment type="catalytic activity">
    <reaction evidence="2">
        <text>K(+)(in) = K(+)(out)</text>
        <dbReference type="Rhea" id="RHEA:29463"/>
        <dbReference type="ChEBI" id="CHEBI:29103"/>
    </reaction>
</comment>
<comment type="catalytic activity">
    <reaction evidence="1">
        <text>Na(+)(in) = Na(+)(out)</text>
        <dbReference type="Rhea" id="RHEA:34963"/>
        <dbReference type="ChEBI" id="CHEBI:29101"/>
    </reaction>
</comment>
<comment type="catalytic activity">
    <reaction evidence="2">
        <text>choline(out) = choline(in)</text>
        <dbReference type="Rhea" id="RHEA:32751"/>
        <dbReference type="ChEBI" id="CHEBI:15354"/>
    </reaction>
</comment>
<comment type="catalytic activity">
    <reaction evidence="2">
        <text>NH4(+)(in) = NH4(+)(out)</text>
        <dbReference type="Rhea" id="RHEA:28747"/>
        <dbReference type="ChEBI" id="CHEBI:28938"/>
    </reaction>
</comment>
<comment type="catalytic activity">
    <reaction evidence="2">
        <text>L-arginine(in) = L-arginine(out)</text>
        <dbReference type="Rhea" id="RHEA:32143"/>
        <dbReference type="ChEBI" id="CHEBI:32682"/>
    </reaction>
</comment>
<comment type="catalytic activity">
    <reaction evidence="2">
        <text>guanidine(out) = guanidine(in)</text>
        <dbReference type="Rhea" id="RHEA:73883"/>
        <dbReference type="ChEBI" id="CHEBI:30087"/>
    </reaction>
</comment>
<comment type="activity regulation">
    <text evidence="2 5">Activated by a myriad of ligands such as acetylcholine, cytisine, nicotine, choline and epibatidine (PubMed:1702646). Activity is modulated by positive allosteric modulators (PAMs), such as flavonoids, with a wide range of chemical diversity, pharmacological sensitivity and efficacy. AChR activity is inhibited by the antagonists alpha-conotoxons RgIA, ImI and ImII, small disulfide-constrained peptides from cone snails (By similarity).</text>
</comment>
<comment type="subunit">
    <text evidence="2">Homopentamer. Can also form heteropentamers with CHRNB2, mainly found in basal forebrain cholinergic neurons.</text>
</comment>
<comment type="subcellular location">
    <subcellularLocation>
        <location evidence="2">Postsynaptic cell membrane</location>
        <topology evidence="4">Multi-pass membrane protein</topology>
    </subcellularLocation>
    <subcellularLocation>
        <location evidence="2">Cell membrane</location>
        <topology evidence="4">Multi-pass membrane protein</topology>
    </subcellularLocation>
    <text evidence="2 3">TMEM35A/NACHO promotes its trafficking to the cell membrane (By similarity). RIC3 promotes its trafficking to the cell membrane (By similarity).</text>
</comment>
<comment type="developmental stage">
    <text>Alpha-7 transcripts transiently accumulate in the developing optic tectum between 5 dpc and 16 dpc.</text>
</comment>
<comment type="similarity">
    <text evidence="8">Belongs to the ligand-gated ion channel (TC 1.A.9) family. Acetylcholine receptor (TC 1.A.9.1) subfamily. Alpha-7/CHRNA7 sub-subfamily.</text>
</comment>
<dbReference type="EMBL" id="X68586">
    <property type="protein sequence ID" value="CAA48576.1"/>
    <property type="molecule type" value="mRNA"/>
</dbReference>
<dbReference type="EMBL" id="X52295">
    <property type="protein sequence ID" value="CAA36543.1"/>
    <property type="molecule type" value="mRNA"/>
</dbReference>
<dbReference type="EMBL" id="X68246">
    <property type="protein sequence ID" value="CAA48317.1"/>
    <property type="molecule type" value="Genomic_DNA"/>
</dbReference>
<dbReference type="PIR" id="JN0113">
    <property type="entry name" value="JN0113"/>
</dbReference>
<dbReference type="PDB" id="1KC4">
    <property type="method" value="NMR"/>
    <property type="chains" value="B=201-219"/>
</dbReference>
<dbReference type="PDB" id="1KL8">
    <property type="method" value="NMR"/>
    <property type="chains" value="B=201-219"/>
</dbReference>
<dbReference type="PDBsum" id="1KC4"/>
<dbReference type="PDBsum" id="1KL8"/>
<dbReference type="SMR" id="P22770"/>
<dbReference type="ComplexPortal" id="CPX-235">
    <property type="entry name" value="Neuronal nicotinic acetylcholine receptor complex, alpha7"/>
</dbReference>
<dbReference type="ComplexPortal" id="CPX-239">
    <property type="entry name" value="Neuronal nicotinic acetylcholine receptor complex, alpha7-beta2"/>
</dbReference>
<dbReference type="FunCoup" id="P22770">
    <property type="interactions" value="277"/>
</dbReference>
<dbReference type="IntAct" id="P22770">
    <property type="interactions" value="1"/>
</dbReference>
<dbReference type="STRING" id="9031.ENSGALP00000006509"/>
<dbReference type="BindingDB" id="P22770"/>
<dbReference type="ChEMBL" id="CHEMBL5169123"/>
<dbReference type="GlyCosmos" id="P22770">
    <property type="glycosylation" value="3 sites, No reported glycans"/>
</dbReference>
<dbReference type="GlyGen" id="P22770">
    <property type="glycosylation" value="3 sites"/>
</dbReference>
<dbReference type="iPTMnet" id="P22770"/>
<dbReference type="SwissPalm" id="P22770"/>
<dbReference type="PaxDb" id="9031-ENSGALP00000006509"/>
<dbReference type="VEuPathDB" id="HostDB:geneid_374001"/>
<dbReference type="eggNOG" id="KOG3646">
    <property type="taxonomic scope" value="Eukaryota"/>
</dbReference>
<dbReference type="InParanoid" id="P22770"/>
<dbReference type="OrthoDB" id="6108017at2759"/>
<dbReference type="PhylomeDB" id="P22770"/>
<dbReference type="EvolutionaryTrace" id="P22770"/>
<dbReference type="PRO" id="PR:P22770"/>
<dbReference type="Proteomes" id="UP000000539">
    <property type="component" value="Unassembled WGS sequence"/>
</dbReference>
<dbReference type="GO" id="GO:0005892">
    <property type="term" value="C:acetylcholine-gated channel complex"/>
    <property type="evidence" value="ECO:0000250"/>
    <property type="project" value="UniProtKB"/>
</dbReference>
<dbReference type="GO" id="GO:0030424">
    <property type="term" value="C:axon"/>
    <property type="evidence" value="ECO:0000314"/>
    <property type="project" value="AgBase"/>
</dbReference>
<dbReference type="GO" id="GO:0005737">
    <property type="term" value="C:cytoplasm"/>
    <property type="evidence" value="ECO:0000314"/>
    <property type="project" value="AgBase"/>
</dbReference>
<dbReference type="GO" id="GO:0030425">
    <property type="term" value="C:dendrite"/>
    <property type="evidence" value="ECO:0000314"/>
    <property type="project" value="AgBase"/>
</dbReference>
<dbReference type="GO" id="GO:0043005">
    <property type="term" value="C:neuron projection"/>
    <property type="evidence" value="ECO:0000318"/>
    <property type="project" value="GO_Central"/>
</dbReference>
<dbReference type="GO" id="GO:0043204">
    <property type="term" value="C:perikaryon"/>
    <property type="evidence" value="ECO:0000314"/>
    <property type="project" value="AgBase"/>
</dbReference>
<dbReference type="GO" id="GO:0005886">
    <property type="term" value="C:plasma membrane"/>
    <property type="evidence" value="ECO:0000250"/>
    <property type="project" value="UniProtKB"/>
</dbReference>
<dbReference type="GO" id="GO:0045211">
    <property type="term" value="C:postsynaptic membrane"/>
    <property type="evidence" value="ECO:0007669"/>
    <property type="project" value="UniProtKB-SubCell"/>
</dbReference>
<dbReference type="GO" id="GO:0045202">
    <property type="term" value="C:synapse"/>
    <property type="evidence" value="ECO:0000318"/>
    <property type="project" value="GO_Central"/>
</dbReference>
<dbReference type="GO" id="GO:0042166">
    <property type="term" value="F:acetylcholine binding"/>
    <property type="evidence" value="ECO:0000250"/>
    <property type="project" value="UniProtKB"/>
</dbReference>
<dbReference type="GO" id="GO:0015464">
    <property type="term" value="F:acetylcholine receptor activity"/>
    <property type="evidence" value="ECO:0000250"/>
    <property type="project" value="UniProtKB"/>
</dbReference>
<dbReference type="GO" id="GO:0022848">
    <property type="term" value="F:acetylcholine-gated monoatomic cation-selective channel activity"/>
    <property type="evidence" value="ECO:0000250"/>
    <property type="project" value="UniProtKB"/>
</dbReference>
<dbReference type="GO" id="GO:0001540">
    <property type="term" value="F:amyloid-beta binding"/>
    <property type="evidence" value="ECO:0000250"/>
    <property type="project" value="UniProtKB"/>
</dbReference>
<dbReference type="GO" id="GO:0017081">
    <property type="term" value="F:chloride channel regulator activity"/>
    <property type="evidence" value="ECO:0000250"/>
    <property type="project" value="UniProtKB"/>
</dbReference>
<dbReference type="GO" id="GO:0042803">
    <property type="term" value="F:protein homodimerization activity"/>
    <property type="evidence" value="ECO:0000250"/>
    <property type="project" value="UniProtKB"/>
</dbReference>
<dbReference type="GO" id="GO:0015643">
    <property type="term" value="F:toxic substance binding"/>
    <property type="evidence" value="ECO:0000250"/>
    <property type="project" value="UniProtKB"/>
</dbReference>
<dbReference type="GO" id="GO:0006816">
    <property type="term" value="P:calcium ion transport"/>
    <property type="evidence" value="ECO:0000250"/>
    <property type="project" value="UniProtKB"/>
</dbReference>
<dbReference type="GO" id="GO:0007268">
    <property type="term" value="P:chemical synaptic transmission"/>
    <property type="evidence" value="ECO:0000318"/>
    <property type="project" value="GO_Central"/>
</dbReference>
<dbReference type="GO" id="GO:0050890">
    <property type="term" value="P:cognition"/>
    <property type="evidence" value="ECO:0000250"/>
    <property type="project" value="UniProtKB"/>
</dbReference>
<dbReference type="GO" id="GO:0006874">
    <property type="term" value="P:intracellular calcium ion homeostasis"/>
    <property type="evidence" value="ECO:0000250"/>
    <property type="project" value="UniProtKB"/>
</dbReference>
<dbReference type="GO" id="GO:0034220">
    <property type="term" value="P:monoatomic ion transmembrane transport"/>
    <property type="evidence" value="ECO:0000318"/>
    <property type="project" value="GO_Central"/>
</dbReference>
<dbReference type="GO" id="GO:1900016">
    <property type="term" value="P:negative regulation of cytokine production involved in inflammatory response"/>
    <property type="evidence" value="ECO:0000250"/>
    <property type="project" value="UniProtKB"/>
</dbReference>
<dbReference type="GO" id="GO:0032720">
    <property type="term" value="P:negative regulation of tumor necrosis factor production"/>
    <property type="evidence" value="ECO:0000250"/>
    <property type="project" value="UniProtKB"/>
</dbReference>
<dbReference type="GO" id="GO:0045766">
    <property type="term" value="P:positive regulation of angiogenesis"/>
    <property type="evidence" value="ECO:0000250"/>
    <property type="project" value="UniProtKB"/>
</dbReference>
<dbReference type="GO" id="GO:0008284">
    <property type="term" value="P:positive regulation of cell population proliferation"/>
    <property type="evidence" value="ECO:0000250"/>
    <property type="project" value="UniProtKB"/>
</dbReference>
<dbReference type="GO" id="GO:0043410">
    <property type="term" value="P:positive regulation of MAPK cascade"/>
    <property type="evidence" value="ECO:0000250"/>
    <property type="project" value="UniProtKB"/>
</dbReference>
<dbReference type="GO" id="GO:0042391">
    <property type="term" value="P:regulation of membrane potential"/>
    <property type="evidence" value="ECO:0000318"/>
    <property type="project" value="GO_Central"/>
</dbReference>
<dbReference type="GO" id="GO:0001666">
    <property type="term" value="P:response to hypoxia"/>
    <property type="evidence" value="ECO:0000250"/>
    <property type="project" value="UniProtKB"/>
</dbReference>
<dbReference type="GO" id="GO:0035094">
    <property type="term" value="P:response to nicotine"/>
    <property type="evidence" value="ECO:0000250"/>
    <property type="project" value="UniProtKB"/>
</dbReference>
<dbReference type="GO" id="GO:0007165">
    <property type="term" value="P:signal transduction"/>
    <property type="evidence" value="ECO:0000250"/>
    <property type="project" value="UniProtKB"/>
</dbReference>
<dbReference type="GO" id="GO:0007271">
    <property type="term" value="P:synaptic transmission, cholinergic"/>
    <property type="evidence" value="ECO:0000250"/>
    <property type="project" value="UniProtKB"/>
</dbReference>
<dbReference type="CDD" id="cd19020">
    <property type="entry name" value="LGIC_ECD_nAChR_A7"/>
    <property type="match status" value="1"/>
</dbReference>
<dbReference type="CDD" id="cd19051">
    <property type="entry name" value="LGIC_TM_cation"/>
    <property type="match status" value="1"/>
</dbReference>
<dbReference type="FunFam" id="1.20.58.390:FF:000007">
    <property type="entry name" value="Neuronal acetylcholine receptor subunit alpha-7"/>
    <property type="match status" value="1"/>
</dbReference>
<dbReference type="FunFam" id="2.70.170.10:FF:000009">
    <property type="entry name" value="Neuronal acetylcholine receptor subunit alpha-7"/>
    <property type="match status" value="1"/>
</dbReference>
<dbReference type="FunFam" id="1.20.58.390:FF:000011">
    <property type="entry name" value="neuronal acetylcholine receptor subunit alpha-7"/>
    <property type="match status" value="1"/>
</dbReference>
<dbReference type="Gene3D" id="2.70.170.10">
    <property type="entry name" value="Neurotransmitter-gated ion-channel ligand-binding domain"/>
    <property type="match status" value="1"/>
</dbReference>
<dbReference type="Gene3D" id="1.20.58.390">
    <property type="entry name" value="Neurotransmitter-gated ion-channel transmembrane domain"/>
    <property type="match status" value="2"/>
</dbReference>
<dbReference type="InterPro" id="IPR006202">
    <property type="entry name" value="Neur_chan_lig-bd"/>
</dbReference>
<dbReference type="InterPro" id="IPR036734">
    <property type="entry name" value="Neur_chan_lig-bd_sf"/>
</dbReference>
<dbReference type="InterPro" id="IPR006201">
    <property type="entry name" value="Neur_channel"/>
</dbReference>
<dbReference type="InterPro" id="IPR036719">
    <property type="entry name" value="Neuro-gated_channel_TM_sf"/>
</dbReference>
<dbReference type="InterPro" id="IPR038050">
    <property type="entry name" value="Neuro_actylchol_rec"/>
</dbReference>
<dbReference type="InterPro" id="IPR006029">
    <property type="entry name" value="Neurotrans-gated_channel_TM"/>
</dbReference>
<dbReference type="InterPro" id="IPR018000">
    <property type="entry name" value="Neurotransmitter_ion_chnl_CS"/>
</dbReference>
<dbReference type="InterPro" id="IPR002394">
    <property type="entry name" value="Nicotinic_acetylcholine_rcpt"/>
</dbReference>
<dbReference type="NCBIfam" id="TIGR00860">
    <property type="entry name" value="LIC"/>
    <property type="match status" value="1"/>
</dbReference>
<dbReference type="PANTHER" id="PTHR18945">
    <property type="entry name" value="NEUROTRANSMITTER GATED ION CHANNEL"/>
    <property type="match status" value="1"/>
</dbReference>
<dbReference type="Pfam" id="PF02931">
    <property type="entry name" value="Neur_chan_LBD"/>
    <property type="match status" value="1"/>
</dbReference>
<dbReference type="Pfam" id="PF02932">
    <property type="entry name" value="Neur_chan_memb"/>
    <property type="match status" value="1"/>
</dbReference>
<dbReference type="PRINTS" id="PR00254">
    <property type="entry name" value="NICOTINICR"/>
</dbReference>
<dbReference type="PRINTS" id="PR00252">
    <property type="entry name" value="NRIONCHANNEL"/>
</dbReference>
<dbReference type="SUPFAM" id="SSF90112">
    <property type="entry name" value="Neurotransmitter-gated ion-channel transmembrane pore"/>
    <property type="match status" value="1"/>
</dbReference>
<dbReference type="SUPFAM" id="SSF63712">
    <property type="entry name" value="Nicotinic receptor ligand binding domain-like"/>
    <property type="match status" value="1"/>
</dbReference>
<dbReference type="PROSITE" id="PS00236">
    <property type="entry name" value="NEUROTR_ION_CHANNEL"/>
    <property type="match status" value="1"/>
</dbReference>
<accession>P22770</accession>
<proteinExistence type="evidence at protein level"/>
<sequence>MGLRALMLWLLAAAGLVRESLQGEFQRKLYKELLKNYNPLERPVANDSQPLTVYFTLSLMQIMDVDEKNQVLTTNIWLQMYWTDHYLQWNVSEYPGVKNVRFPDGLIWKPDILLYNSADERFDATFHTNVLVNSSGHCQYLPPGIFKSSCYIDVRWFPFDVQKCNLKFGSWTYGGWSLDLQMQEADISGYISNGEWDLVGIPGKRTESFYECCKEPYPDITFTVTMRRRTLYYGLNLLIPCVLISALALLVFLLPADSGEKISLGITVLLSLTVFMLLVAEIMPATSDSVPLIAQYFASTMIIVGLSVVVTVIVLQYHHHDPDGGKMPKWTRVILLNWCAWFLRMKRPGEDKVRPACQHKQRRCSLSSMEMNTVSGQQCSNGNMLYIGFRGLDGVHCTPTTDSGVICGRMTCSPTEEENLLHSGHPSEGDPDLAKILEEVRYIANRFRDQDEEEAICNEWKFAASVVDRLCLMAFSVFTIICTIGILMSAPNFVEAVSKDFA</sequence>
<evidence type="ECO:0000250" key="1">
    <source>
        <dbReference type="UniProtKB" id="P02709"/>
    </source>
</evidence>
<evidence type="ECO:0000250" key="2">
    <source>
        <dbReference type="UniProtKB" id="P36544"/>
    </source>
</evidence>
<evidence type="ECO:0000250" key="3">
    <source>
        <dbReference type="UniProtKB" id="Q05941"/>
    </source>
</evidence>
<evidence type="ECO:0000255" key="4"/>
<evidence type="ECO:0000269" key="5">
    <source>
    </source>
</evidence>
<evidence type="ECO:0000269" key="6">
    <source>
    </source>
</evidence>
<evidence type="ECO:0000269" key="7">
    <source>
    </source>
</evidence>
<evidence type="ECO:0000305" key="8"/>
<evidence type="ECO:0007829" key="9">
    <source>
        <dbReference type="PDB" id="1KL8"/>
    </source>
</evidence>
<feature type="signal peptide" evidence="7">
    <location>
        <begin position="1"/>
        <end position="23"/>
    </location>
</feature>
<feature type="chain" id="PRO_0000000370" description="Neuronal acetylcholine receptor subunit alpha-7">
    <location>
        <begin position="24"/>
        <end position="502"/>
    </location>
</feature>
<feature type="topological domain" description="Extracellular">
    <location>
        <begin position="24"/>
        <end position="233"/>
    </location>
</feature>
<feature type="transmembrane region" description="Helical" evidence="4">
    <location>
        <begin position="234"/>
        <end position="254"/>
    </location>
</feature>
<feature type="transmembrane region" description="Helical" evidence="4">
    <location>
        <begin position="262"/>
        <end position="282"/>
    </location>
</feature>
<feature type="transmembrane region" description="Helical" evidence="4">
    <location>
        <begin position="295"/>
        <end position="315"/>
    </location>
</feature>
<feature type="topological domain" description="Cytoplasmic">
    <location>
        <begin position="316"/>
        <end position="469"/>
    </location>
</feature>
<feature type="transmembrane region" description="Helical">
    <location>
        <begin position="470"/>
        <end position="490"/>
    </location>
</feature>
<feature type="binding site" evidence="2">
    <location>
        <position position="42"/>
    </location>
    <ligand>
        <name>Ca(2+)</name>
        <dbReference type="ChEBI" id="CHEBI:29108"/>
    </ligand>
</feature>
<feature type="binding site" evidence="2">
    <location>
        <position position="44"/>
    </location>
    <ligand>
        <name>Ca(2+)</name>
        <dbReference type="ChEBI" id="CHEBI:29108"/>
    </ligand>
</feature>
<feature type="binding site" evidence="2">
    <location>
        <position position="172"/>
    </location>
    <ligand>
        <name>Ca(2+)</name>
        <dbReference type="ChEBI" id="CHEBI:29108"/>
    </ligand>
</feature>
<feature type="binding site" evidence="2">
    <location>
        <position position="210"/>
    </location>
    <ligand>
        <name>Ca(2+)</name>
        <dbReference type="ChEBI" id="CHEBI:29108"/>
    </ligand>
</feature>
<feature type="glycosylation site" description="N-linked (GlcNAc...) asparagine" evidence="4">
    <location>
        <position position="46"/>
    </location>
</feature>
<feature type="glycosylation site" description="N-linked (GlcNAc...) asparagine" evidence="4">
    <location>
        <position position="90"/>
    </location>
</feature>
<feature type="glycosylation site" description="N-linked (GlcNAc...) asparagine" evidence="4">
    <location>
        <position position="133"/>
    </location>
</feature>
<feature type="disulfide bond" evidence="2">
    <location>
        <begin position="150"/>
        <end position="164"/>
    </location>
</feature>
<feature type="disulfide bond" description="Associated with receptor activation" evidence="2">
    <location>
        <begin position="212"/>
        <end position="213"/>
    </location>
</feature>
<feature type="mutagenesis site" description="Suppresses inhibition by the open-channel blocker QX-222." evidence="6">
    <original>L</original>
    <variation>S</variation>
    <variation>T</variation>
    <location>
        <position position="270"/>
    </location>
</feature>
<feature type="strand" evidence="9">
    <location>
        <begin position="215"/>
        <end position="217"/>
    </location>
</feature>